<keyword id="KW-1003">Cell membrane</keyword>
<keyword id="KW-0133">Cell shape</keyword>
<keyword id="KW-0961">Cell wall biogenesis/degradation</keyword>
<keyword id="KW-0963">Cytoplasm</keyword>
<keyword id="KW-0206">Cytoskeleton</keyword>
<keyword id="KW-0217">Developmental protein</keyword>
<keyword id="KW-0341">Growth regulation</keyword>
<keyword id="KW-0472">Membrane</keyword>
<keyword id="KW-1185">Reference proteome</keyword>
<keyword id="KW-0677">Repeat</keyword>
<organism>
    <name type="scientific">Arabidopsis thaliana</name>
    <name type="common">Mouse-ear cress</name>
    <dbReference type="NCBI Taxonomy" id="3702"/>
    <lineage>
        <taxon>Eukaryota</taxon>
        <taxon>Viridiplantae</taxon>
        <taxon>Streptophyta</taxon>
        <taxon>Embryophyta</taxon>
        <taxon>Tracheophyta</taxon>
        <taxon>Spermatophyta</taxon>
        <taxon>Magnoliopsida</taxon>
        <taxon>eudicotyledons</taxon>
        <taxon>Gunneridae</taxon>
        <taxon>Pentapetalae</taxon>
        <taxon>rosids</taxon>
        <taxon>malvids</taxon>
        <taxon>Brassicales</taxon>
        <taxon>Brassicaceae</taxon>
        <taxon>Camelineae</taxon>
        <taxon>Arabidopsis</taxon>
    </lineage>
</organism>
<comment type="function">
    <text evidence="1">Regulator of the microtubular cytoskeleton. Microtubule-associated protein involved in the association of cellulase synthase (CESA) complexes (CSCs) and cortical microtubules. Promotes dynamics of CSCs in the plasma membrane. Regulates primary cell wall biosynthesis and cellulose microfibrils organization.</text>
</comment>
<comment type="subunit">
    <text evidence="1">Associates with cellulase synthase (CESA) complexes. Binds to cortical microtubules.</text>
</comment>
<comment type="subcellular location">
    <subcellularLocation>
        <location evidence="1">Cell membrane</location>
        <topology evidence="5">Peripheral membrane protein</topology>
        <orientation evidence="5">Cytoplasmic side</orientation>
    </subcellularLocation>
    <subcellularLocation>
        <location evidence="1">Cytoplasm</location>
        <location evidence="1">Cytoskeleton</location>
    </subcellularLocation>
    <text evidence="1">Colocalizes with cellulase synthase (CESA) complexes (CSCs) in a dynamic way.</text>
</comment>
<proteinExistence type="inferred from homology"/>
<name>CSI2_ARATH</name>
<dbReference type="EMBL" id="AC074228">
    <property type="protein sequence ID" value="AAG50555.1"/>
    <property type="molecule type" value="Genomic_DNA"/>
</dbReference>
<dbReference type="EMBL" id="CP002684">
    <property type="protein sequence ID" value="AEE32022.1"/>
    <property type="molecule type" value="Genomic_DNA"/>
</dbReference>
<dbReference type="PIR" id="E96505">
    <property type="entry name" value="E96505"/>
</dbReference>
<dbReference type="RefSeq" id="NP_175078.1">
    <property type="nucleotide sequence ID" value="NM_103538.1"/>
</dbReference>
<dbReference type="FunCoup" id="Q9C6Y4">
    <property type="interactions" value="2"/>
</dbReference>
<dbReference type="IntAct" id="Q9C6Y4">
    <property type="interactions" value="1"/>
</dbReference>
<dbReference type="STRING" id="3702.Q9C6Y4"/>
<dbReference type="iPTMnet" id="Q9C6Y4"/>
<dbReference type="PaxDb" id="3702-AT1G44120.1"/>
<dbReference type="ProteomicsDB" id="222656"/>
<dbReference type="EnsemblPlants" id="AT1G44120.1">
    <property type="protein sequence ID" value="AT1G44120.1"/>
    <property type="gene ID" value="AT1G44120"/>
</dbReference>
<dbReference type="GeneID" id="841015"/>
<dbReference type="Gramene" id="AT1G44120.1">
    <property type="protein sequence ID" value="AT1G44120.1"/>
    <property type="gene ID" value="AT1G44120"/>
</dbReference>
<dbReference type="KEGG" id="ath:AT1G44120"/>
<dbReference type="Araport" id="AT1G44120"/>
<dbReference type="TAIR" id="AT1G44120">
    <property type="gene designation" value="CSI2"/>
</dbReference>
<dbReference type="eggNOG" id="KOG0167">
    <property type="taxonomic scope" value="Eukaryota"/>
</dbReference>
<dbReference type="HOGENOM" id="CLU_233004_0_0_1"/>
<dbReference type="InParanoid" id="Q9C6Y4"/>
<dbReference type="OMA" id="KMGIIEQ"/>
<dbReference type="PhylomeDB" id="Q9C6Y4"/>
<dbReference type="PRO" id="PR:Q9C6Y4"/>
<dbReference type="Proteomes" id="UP000006548">
    <property type="component" value="Chromosome 1"/>
</dbReference>
<dbReference type="ExpressionAtlas" id="Q9C6Y4">
    <property type="expression patterns" value="baseline and differential"/>
</dbReference>
<dbReference type="GO" id="GO:0010330">
    <property type="term" value="C:cellulose synthase complex"/>
    <property type="evidence" value="ECO:0007669"/>
    <property type="project" value="InterPro"/>
</dbReference>
<dbReference type="GO" id="GO:0005737">
    <property type="term" value="C:cytoplasm"/>
    <property type="evidence" value="ECO:0007669"/>
    <property type="project" value="UniProtKB-KW"/>
</dbReference>
<dbReference type="GO" id="GO:0005856">
    <property type="term" value="C:cytoskeleton"/>
    <property type="evidence" value="ECO:0007669"/>
    <property type="project" value="UniProtKB-SubCell"/>
</dbReference>
<dbReference type="GO" id="GO:0005886">
    <property type="term" value="C:plasma membrane"/>
    <property type="evidence" value="ECO:0007669"/>
    <property type="project" value="UniProtKB-SubCell"/>
</dbReference>
<dbReference type="GO" id="GO:0008017">
    <property type="term" value="F:microtubule binding"/>
    <property type="evidence" value="ECO:0007669"/>
    <property type="project" value="InterPro"/>
</dbReference>
<dbReference type="GO" id="GO:0051211">
    <property type="term" value="P:anisotropic cell growth"/>
    <property type="evidence" value="ECO:0007669"/>
    <property type="project" value="InterPro"/>
</dbReference>
<dbReference type="GO" id="GO:0071555">
    <property type="term" value="P:cell wall organization"/>
    <property type="evidence" value="ECO:0007669"/>
    <property type="project" value="UniProtKB-KW"/>
</dbReference>
<dbReference type="GO" id="GO:0008360">
    <property type="term" value="P:regulation of cell shape"/>
    <property type="evidence" value="ECO:0007669"/>
    <property type="project" value="UniProtKB-KW"/>
</dbReference>
<dbReference type="GO" id="GO:2001006">
    <property type="term" value="P:regulation of cellulose biosynthetic process"/>
    <property type="evidence" value="ECO:0007669"/>
    <property type="project" value="InterPro"/>
</dbReference>
<dbReference type="CDD" id="cd00030">
    <property type="entry name" value="C2"/>
    <property type="match status" value="1"/>
</dbReference>
<dbReference type="Gene3D" id="2.60.40.150">
    <property type="entry name" value="C2 domain"/>
    <property type="match status" value="1"/>
</dbReference>
<dbReference type="Gene3D" id="1.25.10.10">
    <property type="entry name" value="Leucine-rich Repeat Variant"/>
    <property type="match status" value="7"/>
</dbReference>
<dbReference type="InterPro" id="IPR011989">
    <property type="entry name" value="ARM-like"/>
</dbReference>
<dbReference type="InterPro" id="IPR016024">
    <property type="entry name" value="ARM-type_fold"/>
</dbReference>
<dbReference type="InterPro" id="IPR000225">
    <property type="entry name" value="Armadillo"/>
</dbReference>
<dbReference type="InterPro" id="IPR000008">
    <property type="entry name" value="C2_dom"/>
</dbReference>
<dbReference type="InterPro" id="IPR035892">
    <property type="entry name" value="C2_domain_sf"/>
</dbReference>
<dbReference type="InterPro" id="IPR044297">
    <property type="entry name" value="CSI1/2/3"/>
</dbReference>
<dbReference type="PANTHER" id="PTHR46369">
    <property type="entry name" value="PROTEIN CELLULOSE SYNTHASE INTERACTIVE 1"/>
    <property type="match status" value="1"/>
</dbReference>
<dbReference type="PANTHER" id="PTHR46369:SF4">
    <property type="entry name" value="PROTEIN CELLULOSE SYNTHASE INTERACTIVE 2"/>
    <property type="match status" value="1"/>
</dbReference>
<dbReference type="Pfam" id="PF00168">
    <property type="entry name" value="C2"/>
    <property type="match status" value="1"/>
</dbReference>
<dbReference type="SMART" id="SM00185">
    <property type="entry name" value="ARM"/>
    <property type="match status" value="13"/>
</dbReference>
<dbReference type="SMART" id="SM00239">
    <property type="entry name" value="C2"/>
    <property type="match status" value="1"/>
</dbReference>
<dbReference type="SUPFAM" id="SSF48371">
    <property type="entry name" value="ARM repeat"/>
    <property type="match status" value="4"/>
</dbReference>
<dbReference type="SUPFAM" id="SSF49562">
    <property type="entry name" value="C2 domain (Calcium/lipid-binding domain, CaLB)"/>
    <property type="match status" value="1"/>
</dbReference>
<dbReference type="PROSITE" id="PS50004">
    <property type="entry name" value="C2"/>
    <property type="match status" value="1"/>
</dbReference>
<evidence type="ECO:0000250" key="1">
    <source>
        <dbReference type="UniProtKB" id="F4IIM1"/>
    </source>
</evidence>
<evidence type="ECO:0000255" key="2"/>
<evidence type="ECO:0000255" key="3">
    <source>
        <dbReference type="PROSITE-ProRule" id="PRU00041"/>
    </source>
</evidence>
<evidence type="ECO:0000303" key="4">
    <source>
    </source>
</evidence>
<evidence type="ECO:0000305" key="5"/>
<evidence type="ECO:0000312" key="6">
    <source>
        <dbReference type="Araport" id="AT1G44120"/>
    </source>
</evidence>
<evidence type="ECO:0000312" key="7">
    <source>
        <dbReference type="EMBL" id="AAG50555.1"/>
    </source>
</evidence>
<accession>Q9C6Y4</accession>
<protein>
    <recommendedName>
        <fullName evidence="4">Protein CELLULOSE SYNTHASE INTERACTIVE 2</fullName>
    </recommendedName>
</protein>
<feature type="chain" id="PRO_0000438334" description="Protein CELLULOSE SYNTHASE INTERACTIVE 2">
    <location>
        <begin position="1"/>
        <end position="2114"/>
    </location>
</feature>
<feature type="repeat" description="ARM 1" evidence="2">
    <location>
        <begin position="2"/>
        <end position="42"/>
    </location>
</feature>
<feature type="repeat" description="ARM 2" evidence="2">
    <location>
        <begin position="46"/>
        <end position="87"/>
    </location>
</feature>
<feature type="repeat" description="ARM 3" evidence="2">
    <location>
        <begin position="89"/>
        <end position="128"/>
    </location>
</feature>
<feature type="repeat" description="ARM 4" evidence="2">
    <location>
        <begin position="135"/>
        <end position="177"/>
    </location>
</feature>
<feature type="repeat" description="ARM 5" evidence="2">
    <location>
        <begin position="180"/>
        <end position="219"/>
    </location>
</feature>
<feature type="repeat" description="ARM 6" evidence="2">
    <location>
        <begin position="222"/>
        <end position="262"/>
    </location>
</feature>
<feature type="repeat" description="ARM 7" evidence="2">
    <location>
        <begin position="265"/>
        <end position="305"/>
    </location>
</feature>
<feature type="repeat" description="ARM 8" evidence="2">
    <location>
        <begin position="354"/>
        <end position="394"/>
    </location>
</feature>
<feature type="repeat" description="ARM 9" evidence="2">
    <location>
        <begin position="396"/>
        <end position="435"/>
    </location>
</feature>
<feature type="repeat" description="ARM 10" evidence="2">
    <location>
        <begin position="479"/>
        <end position="519"/>
    </location>
</feature>
<feature type="repeat" description="ARM 11" evidence="2">
    <location>
        <begin position="522"/>
        <end position="561"/>
    </location>
</feature>
<feature type="repeat" description="ARM 12" evidence="2">
    <location>
        <begin position="563"/>
        <end position="595"/>
    </location>
</feature>
<feature type="repeat" description="ARM 13" evidence="2">
    <location>
        <begin position="601"/>
        <end position="640"/>
    </location>
</feature>
<feature type="repeat" description="ARM 14" evidence="2">
    <location>
        <begin position="643"/>
        <end position="682"/>
    </location>
</feature>
<feature type="repeat" description="ARM 15" evidence="2">
    <location>
        <begin position="708"/>
        <end position="750"/>
    </location>
</feature>
<feature type="repeat" description="ARM 16" evidence="2">
    <location>
        <begin position="774"/>
        <end position="816"/>
    </location>
</feature>
<feature type="repeat" description="ARM 17" evidence="2">
    <location>
        <begin position="825"/>
        <end position="865"/>
    </location>
</feature>
<feature type="repeat" description="ARM 18" evidence="2">
    <location>
        <begin position="870"/>
        <end position="910"/>
    </location>
</feature>
<feature type="repeat" description="ARM 19" evidence="2">
    <location>
        <begin position="914"/>
        <end position="953"/>
    </location>
</feature>
<feature type="repeat" description="ARM 20" evidence="2">
    <location>
        <begin position="994"/>
        <end position="1033"/>
    </location>
</feature>
<feature type="repeat" description="ARM 21" evidence="2">
    <location>
        <begin position="1044"/>
        <end position="1083"/>
    </location>
</feature>
<feature type="repeat" description="ARM 22" evidence="2">
    <location>
        <begin position="1087"/>
        <end position="1128"/>
    </location>
</feature>
<feature type="repeat" description="ARM 23" evidence="2">
    <location>
        <begin position="1141"/>
        <end position="1182"/>
    </location>
</feature>
<feature type="repeat" description="ARM 24" evidence="2">
    <location>
        <begin position="1185"/>
        <end position="1225"/>
    </location>
</feature>
<feature type="repeat" description="ARM 25" evidence="2">
    <location>
        <begin position="1227"/>
        <end position="1264"/>
    </location>
</feature>
<feature type="repeat" description="ARM 26" evidence="2">
    <location>
        <begin position="1265"/>
        <end position="1304"/>
    </location>
</feature>
<feature type="repeat" description="ARM 27" evidence="2">
    <location>
        <begin position="1312"/>
        <end position="1353"/>
    </location>
</feature>
<feature type="repeat" description="ARM 28" evidence="2">
    <location>
        <begin position="1355"/>
        <end position="1394"/>
    </location>
</feature>
<feature type="repeat" description="ARM 29" evidence="2">
    <location>
        <begin position="1396"/>
        <end position="1435"/>
    </location>
</feature>
<feature type="repeat" description="ARM 30" evidence="2">
    <location>
        <begin position="1454"/>
        <end position="1494"/>
    </location>
</feature>
<feature type="repeat" description="ARM 31" evidence="2">
    <location>
        <begin position="1496"/>
        <end position="1525"/>
    </location>
</feature>
<feature type="repeat" description="ARM 32" evidence="2">
    <location>
        <begin position="1526"/>
        <end position="1564"/>
    </location>
</feature>
<feature type="repeat" description="ARM 33" evidence="2">
    <location>
        <begin position="1566"/>
        <end position="1605"/>
    </location>
</feature>
<feature type="repeat" description="ARM 34" evidence="2">
    <location>
        <begin position="1606"/>
        <end position="1648"/>
    </location>
</feature>
<feature type="repeat" description="ARM 35" evidence="2">
    <location>
        <begin position="1650"/>
        <end position="1689"/>
    </location>
</feature>
<feature type="repeat" description="ARM 36" evidence="2">
    <location>
        <begin position="1690"/>
        <end position="1730"/>
    </location>
</feature>
<feature type="repeat" description="ARM 37" evidence="2">
    <location>
        <begin position="1732"/>
        <end position="1771"/>
    </location>
</feature>
<feature type="repeat" description="ARM 38" evidence="2">
    <location>
        <begin position="1772"/>
        <end position="1813"/>
    </location>
</feature>
<feature type="repeat" description="ARM 39" evidence="2">
    <location>
        <begin position="1816"/>
        <end position="1855"/>
    </location>
</feature>
<feature type="repeat" description="ARM 40" evidence="2">
    <location>
        <begin position="1857"/>
        <end position="1898"/>
    </location>
</feature>
<feature type="repeat" description="ARM 41" evidence="2">
    <location>
        <begin position="1901"/>
        <end position="1940"/>
    </location>
</feature>
<feature type="repeat" description="ARM 42" evidence="2">
    <location>
        <begin position="1949"/>
        <end position="1993"/>
    </location>
</feature>
<feature type="domain" description="C2" evidence="3">
    <location>
        <begin position="1974"/>
        <end position="2087"/>
    </location>
</feature>
<reference key="1">
    <citation type="journal article" date="2000" name="Nature">
        <title>Sequence and analysis of chromosome 1 of the plant Arabidopsis thaliana.</title>
        <authorList>
            <person name="Theologis A."/>
            <person name="Ecker J.R."/>
            <person name="Palm C.J."/>
            <person name="Federspiel N.A."/>
            <person name="Kaul S."/>
            <person name="White O."/>
            <person name="Alonso J."/>
            <person name="Altafi H."/>
            <person name="Araujo R."/>
            <person name="Bowman C.L."/>
            <person name="Brooks S.Y."/>
            <person name="Buehler E."/>
            <person name="Chan A."/>
            <person name="Chao Q."/>
            <person name="Chen H."/>
            <person name="Cheuk R.F."/>
            <person name="Chin C.W."/>
            <person name="Chung M.K."/>
            <person name="Conn L."/>
            <person name="Conway A.B."/>
            <person name="Conway A.R."/>
            <person name="Creasy T.H."/>
            <person name="Dewar K."/>
            <person name="Dunn P."/>
            <person name="Etgu P."/>
            <person name="Feldblyum T.V."/>
            <person name="Feng J.-D."/>
            <person name="Fong B."/>
            <person name="Fujii C.Y."/>
            <person name="Gill J.E."/>
            <person name="Goldsmith A.D."/>
            <person name="Haas B."/>
            <person name="Hansen N.F."/>
            <person name="Hughes B."/>
            <person name="Huizar L."/>
            <person name="Hunter J.L."/>
            <person name="Jenkins J."/>
            <person name="Johnson-Hopson C."/>
            <person name="Khan S."/>
            <person name="Khaykin E."/>
            <person name="Kim C.J."/>
            <person name="Koo H.L."/>
            <person name="Kremenetskaia I."/>
            <person name="Kurtz D.B."/>
            <person name="Kwan A."/>
            <person name="Lam B."/>
            <person name="Langin-Hooper S."/>
            <person name="Lee A."/>
            <person name="Lee J.M."/>
            <person name="Lenz C.A."/>
            <person name="Li J.H."/>
            <person name="Li Y.-P."/>
            <person name="Lin X."/>
            <person name="Liu S.X."/>
            <person name="Liu Z.A."/>
            <person name="Luros J.S."/>
            <person name="Maiti R."/>
            <person name="Marziali A."/>
            <person name="Militscher J."/>
            <person name="Miranda M."/>
            <person name="Nguyen M."/>
            <person name="Nierman W.C."/>
            <person name="Osborne B.I."/>
            <person name="Pai G."/>
            <person name="Peterson J."/>
            <person name="Pham P.K."/>
            <person name="Rizzo M."/>
            <person name="Rooney T."/>
            <person name="Rowley D."/>
            <person name="Sakano H."/>
            <person name="Salzberg S.L."/>
            <person name="Schwartz J.R."/>
            <person name="Shinn P."/>
            <person name="Southwick A.M."/>
            <person name="Sun H."/>
            <person name="Tallon L.J."/>
            <person name="Tambunga G."/>
            <person name="Toriumi M.J."/>
            <person name="Town C.D."/>
            <person name="Utterback T."/>
            <person name="Van Aken S."/>
            <person name="Vaysberg M."/>
            <person name="Vysotskaia V.S."/>
            <person name="Walker M."/>
            <person name="Wu D."/>
            <person name="Yu G."/>
            <person name="Fraser C.M."/>
            <person name="Venter J.C."/>
            <person name="Davis R.W."/>
        </authorList>
    </citation>
    <scope>NUCLEOTIDE SEQUENCE [LARGE SCALE GENOMIC DNA]</scope>
    <source>
        <strain>cv. Columbia</strain>
    </source>
</reference>
<reference key="2">
    <citation type="journal article" date="2017" name="Plant J.">
        <title>Araport11: a complete reannotation of the Arabidopsis thaliana reference genome.</title>
        <authorList>
            <person name="Cheng C.Y."/>
            <person name="Krishnakumar V."/>
            <person name="Chan A.P."/>
            <person name="Thibaud-Nissen F."/>
            <person name="Schobel S."/>
            <person name="Town C.D."/>
        </authorList>
    </citation>
    <scope>GENOME REANNOTATION</scope>
    <source>
        <strain>cv. Columbia</strain>
    </source>
</reference>
<reference key="3">
    <citation type="journal article" date="2010" name="Proc. Natl. Acad. Sci. U.S.A.">
        <title>Identification of a cellulose synthase-associated protein required for cellulose biosynthesis.</title>
        <authorList>
            <person name="Gu Y."/>
            <person name="Kaplinsky N."/>
            <person name="Bringmann M."/>
            <person name="Cobb A."/>
            <person name="Carroll A."/>
            <person name="Sampathkumar A."/>
            <person name="Baskin T.I."/>
            <person name="Persson S."/>
            <person name="Somerville C.R."/>
        </authorList>
    </citation>
    <scope>GENE FAMILY</scope>
    <scope>NOMENCLATURE</scope>
    <source>
        <strain>cv. Columbia</strain>
    </source>
</reference>
<reference key="4">
    <citation type="journal article" date="2014" name="Int. Rev. Cell Mol. Biol.">
        <title>Microtubule organization and microtubule-associated proteins in plant cells.</title>
        <authorList>
            <person name="Hamada T."/>
        </authorList>
    </citation>
    <scope>REVIEW</scope>
</reference>
<gene>
    <name evidence="4" type="primary">CSI2</name>
    <name evidence="6" type="ordered locus">At1g44120</name>
    <name evidence="7" type="ORF">T7O23.25</name>
</gene>
<sequence length="2114" mass="230854">MTSEMDDPEKAAVTITRLIEQLHAKKSSAQEKELSTARLLGLAKGKKECRKIISQNVNAMPAFISLLRSGTLLAKLNSASVLTVLCKDKNVRSKILIGGCIPPLLSLLKSDSVDAKRVVAEAIYEVSLCGMDGDNVGTKIFVTEGVVPSLWDQLKTGKKQDKTVEGHLVGALRNLCGDKDGFWALTLEDGGVDIILKLLQSSNPVSQSNAASLLARLIRIFTSSISKVEESGAVQVLVQLLGEENSVFVRASVVNALEAITSKSEEAITVARDLDGIHLLISAVVASSKESVEEETERVLQSYGTQALANLCGGMSGLIVYLGGLSLSPRLTEPIADILGALAYALRKFQLSCGDTREAFDPTLTEGILVKLLKPRDTQLIHERILEAMESLFGNVDLSKLLNNVDAKRVLVCLTILATDGPRERMITCLSNLCKHGDVWDAIGKREGIQILIPYLGLSSEQHQELSVEFLAILTDNVEESRWAVTSAGGIPPLLQILETGVSQKAKDDAVRVILNLCCHSEEIRLCVEKAGAIPALLGLLKNGGPKSQESSANTLLKLIKTADPSVIEQVQALFLGDAPKSKTHLIRVLGHVLASASLEEFVTKGSAANNGLRSLVQRLASSNEKMKENAASVLADLFSSRKDLCGGLGFDEDDNPCTKLLSGNTHAVATQLAHALGSLSNPTKKKTATKKLSGPEVEVIKPLIKSAKTNPIESTENPMSTLANLLSDPNVAAEALNDDVVSALTRVLREGTLQGKRNASHALHQLLKHFQVSDVFKGNEQCRFAVSELIDLLNATDLNNSAFIDVLEVLSLLAKAKYGANLSHNPFSAFGEVPSNLDSLVRGLAEGHPLVQDKAIEILSRFCKTQFILLGRLLVTQSKSISSLANRTINSSSPEIKVGGAILLVCAAKNDITLWAEAVEQSGYLKTLVNTLLDMSKQNSKSASYGIEIQRPRSFITSNLCLRMDDSEMVDPVTILGSTASMWLLSIICSSHPSNRLVVMEGNGLEIIAENLQRNKSNTQENSSDSEEKWIAMSFLAVMSQEPKVVSSPATENILQTLAPFMQSEQMIDGYFTAQVLAALVRHKNDKTISEIMNSDIVETTINLVGCEESDTRSLCALAEELSLVQNPYEATLEVLFENERVRSGSFTKKCIPLLVNLLKPYADKVGGIPVAIRLLRRIADNDDLSKLLIAEAGALDALAKYLSLSPQDSTEITVSELLESLFRSPEITRHKTAISSMKQLIGILHLASRSTRYNAARVLCELFSSEHIRDSELAWKALSPLIEMLNTTLESERVAALTALVKLTMGINPRPDILTSLEGNPLDNIYKILSLDSSSLESKTSAARICRFLFTNEGLRTSTSAACCIVSLISLIRTGKSTAIEAGMFALDRLLDIKRFVEVAEEHDCVNLFYGYVASENYLISEAAISCLTKMAKDNTPRKMDLIKMGIIEKCISQLSKSPPSSLCSVIADLFRVLTNVGVIARSQDAIKMVQPLLLILLRQDLDFQGQLGGLQAIANILEKPMVLESLKIASSTIIMPLIPLLESESIAVKNATTILLTSLLEMQRFQEEITTKNLIAPLVKLVGIRVRNLQEIALMGLERSSVTWPKEVADTGGIQELSKVIIDEDPQLPVYLWESAAFILCNILRINPEHYYFTVTIPVLSKMLFSTAESTVILAIDALIIRENQDSSSVQEMAESSALDALLDLLRSHHCEELSARLLELILRNPKVRETKICQFVLTPLSEYILDPDTISESAKILIAMALGDISQHEGLAKATDSPVACRALISLLEDEPSEEMQMVVMRALENFAMHSRTSRKAMAEAGGVYWVQEMLRSSNPQVSTQAALIIKSLFSNHTLQEYVSGEIIKSLTNAMEREFWTTTAINVEIVRTLNTILTTFPKLRSSEAATACIPHLIGALKSGEQEARDSAMDTIYTLRQSWTTMPTETARSQAVLAADAIPVLQLMMKSKLKSPAPSSFHERGNSLLNCLPGSLTVAIKRGDNLKRSNAFCRLIIDNCPTKKTKVVKRSSSPVWKESFTWDFAAPPRGQFLEIVCKSNNIFRNKNLGKVRIPIDKVLSEGSYSGIFKLNDESKKDNSSDRSLEIEIVWSNQSF</sequence>